<reference key="1">
    <citation type="submission" date="2008-07" db="EMBL/GenBank/DDBJ databases">
        <title>Complete sequence of Geobacter bemidjiensis BEM.</title>
        <authorList>
            <consortium name="US DOE Joint Genome Institute"/>
            <person name="Lucas S."/>
            <person name="Copeland A."/>
            <person name="Lapidus A."/>
            <person name="Glavina del Rio T."/>
            <person name="Dalin E."/>
            <person name="Tice H."/>
            <person name="Bruce D."/>
            <person name="Goodwin L."/>
            <person name="Pitluck S."/>
            <person name="Kiss H."/>
            <person name="Brettin T."/>
            <person name="Detter J.C."/>
            <person name="Han C."/>
            <person name="Kuske C.R."/>
            <person name="Schmutz J."/>
            <person name="Larimer F."/>
            <person name="Land M."/>
            <person name="Hauser L."/>
            <person name="Kyrpides N."/>
            <person name="Lykidis A."/>
            <person name="Lovley D."/>
            <person name="Richardson P."/>
        </authorList>
    </citation>
    <scope>NUCLEOTIDE SEQUENCE [LARGE SCALE GENOMIC DNA]</scope>
    <source>
        <strain>ATCC BAA-1014 / DSM 16622 / JCM 12645 / Bem</strain>
    </source>
</reference>
<gene>
    <name evidence="1" type="primary">nfo</name>
    <name type="ordered locus">Gbem_0356</name>
</gene>
<feature type="chain" id="PRO_1000096884" description="Probable endonuclease 4">
    <location>
        <begin position="1"/>
        <end position="283"/>
    </location>
</feature>
<feature type="binding site" evidence="1">
    <location>
        <position position="67"/>
    </location>
    <ligand>
        <name>Zn(2+)</name>
        <dbReference type="ChEBI" id="CHEBI:29105"/>
        <label>1</label>
    </ligand>
</feature>
<feature type="binding site" evidence="1">
    <location>
        <position position="107"/>
    </location>
    <ligand>
        <name>Zn(2+)</name>
        <dbReference type="ChEBI" id="CHEBI:29105"/>
        <label>1</label>
    </ligand>
</feature>
<feature type="binding site" evidence="1">
    <location>
        <position position="144"/>
    </location>
    <ligand>
        <name>Zn(2+)</name>
        <dbReference type="ChEBI" id="CHEBI:29105"/>
        <label>1</label>
    </ligand>
</feature>
<feature type="binding site" evidence="1">
    <location>
        <position position="144"/>
    </location>
    <ligand>
        <name>Zn(2+)</name>
        <dbReference type="ChEBI" id="CHEBI:29105"/>
        <label>2</label>
    </ligand>
</feature>
<feature type="binding site" evidence="1">
    <location>
        <position position="178"/>
    </location>
    <ligand>
        <name>Zn(2+)</name>
        <dbReference type="ChEBI" id="CHEBI:29105"/>
        <label>2</label>
    </ligand>
</feature>
<feature type="binding site" evidence="1">
    <location>
        <position position="181"/>
    </location>
    <ligand>
        <name>Zn(2+)</name>
        <dbReference type="ChEBI" id="CHEBI:29105"/>
        <label>3</label>
    </ligand>
</feature>
<feature type="binding site" evidence="1">
    <location>
        <position position="215"/>
    </location>
    <ligand>
        <name>Zn(2+)</name>
        <dbReference type="ChEBI" id="CHEBI:29105"/>
        <label>2</label>
    </ligand>
</feature>
<feature type="binding site" evidence="1">
    <location>
        <position position="228"/>
    </location>
    <ligand>
        <name>Zn(2+)</name>
        <dbReference type="ChEBI" id="CHEBI:29105"/>
        <label>3</label>
    </ligand>
</feature>
<feature type="binding site" evidence="1">
    <location>
        <position position="230"/>
    </location>
    <ligand>
        <name>Zn(2+)</name>
        <dbReference type="ChEBI" id="CHEBI:29105"/>
        <label>3</label>
    </ligand>
</feature>
<feature type="binding site" evidence="1">
    <location>
        <position position="260"/>
    </location>
    <ligand>
        <name>Zn(2+)</name>
        <dbReference type="ChEBI" id="CHEBI:29105"/>
        <label>2</label>
    </ligand>
</feature>
<proteinExistence type="inferred from homology"/>
<dbReference type="EC" id="3.1.21.2" evidence="1"/>
<dbReference type="EMBL" id="CP001124">
    <property type="protein sequence ID" value="ACH37387.1"/>
    <property type="molecule type" value="Genomic_DNA"/>
</dbReference>
<dbReference type="RefSeq" id="WP_012528794.1">
    <property type="nucleotide sequence ID" value="NC_011146.1"/>
</dbReference>
<dbReference type="SMR" id="B5EAS8"/>
<dbReference type="STRING" id="404380.Gbem_0356"/>
<dbReference type="KEGG" id="gbm:Gbem_0356"/>
<dbReference type="eggNOG" id="COG0648">
    <property type="taxonomic scope" value="Bacteria"/>
</dbReference>
<dbReference type="HOGENOM" id="CLU_025885_0_1_7"/>
<dbReference type="OrthoDB" id="9805666at2"/>
<dbReference type="Proteomes" id="UP000008825">
    <property type="component" value="Chromosome"/>
</dbReference>
<dbReference type="GO" id="GO:0008833">
    <property type="term" value="F:deoxyribonuclease IV (phage-T4-induced) activity"/>
    <property type="evidence" value="ECO:0007669"/>
    <property type="project" value="UniProtKB-UniRule"/>
</dbReference>
<dbReference type="GO" id="GO:0003677">
    <property type="term" value="F:DNA binding"/>
    <property type="evidence" value="ECO:0007669"/>
    <property type="project" value="InterPro"/>
</dbReference>
<dbReference type="GO" id="GO:0003906">
    <property type="term" value="F:DNA-(apurinic or apyrimidinic site) endonuclease activity"/>
    <property type="evidence" value="ECO:0007669"/>
    <property type="project" value="TreeGrafter"/>
</dbReference>
<dbReference type="GO" id="GO:0008081">
    <property type="term" value="F:phosphoric diester hydrolase activity"/>
    <property type="evidence" value="ECO:0007669"/>
    <property type="project" value="TreeGrafter"/>
</dbReference>
<dbReference type="GO" id="GO:0008270">
    <property type="term" value="F:zinc ion binding"/>
    <property type="evidence" value="ECO:0007669"/>
    <property type="project" value="UniProtKB-UniRule"/>
</dbReference>
<dbReference type="GO" id="GO:0006284">
    <property type="term" value="P:base-excision repair"/>
    <property type="evidence" value="ECO:0007669"/>
    <property type="project" value="TreeGrafter"/>
</dbReference>
<dbReference type="CDD" id="cd00019">
    <property type="entry name" value="AP2Ec"/>
    <property type="match status" value="1"/>
</dbReference>
<dbReference type="FunFam" id="3.20.20.150:FF:000001">
    <property type="entry name" value="Probable endonuclease 4"/>
    <property type="match status" value="1"/>
</dbReference>
<dbReference type="Gene3D" id="3.20.20.150">
    <property type="entry name" value="Divalent-metal-dependent TIM barrel enzymes"/>
    <property type="match status" value="1"/>
</dbReference>
<dbReference type="HAMAP" id="MF_00152">
    <property type="entry name" value="Nfo"/>
    <property type="match status" value="1"/>
</dbReference>
<dbReference type="InterPro" id="IPR001719">
    <property type="entry name" value="AP_endonuc_2"/>
</dbReference>
<dbReference type="InterPro" id="IPR018246">
    <property type="entry name" value="AP_endonuc_F2_Zn_BS"/>
</dbReference>
<dbReference type="InterPro" id="IPR036237">
    <property type="entry name" value="Xyl_isomerase-like_sf"/>
</dbReference>
<dbReference type="InterPro" id="IPR013022">
    <property type="entry name" value="Xyl_isomerase-like_TIM-brl"/>
</dbReference>
<dbReference type="NCBIfam" id="TIGR00587">
    <property type="entry name" value="nfo"/>
    <property type="match status" value="1"/>
</dbReference>
<dbReference type="PANTHER" id="PTHR21445:SF0">
    <property type="entry name" value="APURINIC-APYRIMIDINIC ENDONUCLEASE"/>
    <property type="match status" value="1"/>
</dbReference>
<dbReference type="PANTHER" id="PTHR21445">
    <property type="entry name" value="ENDONUCLEASE IV ENDODEOXYRIBONUCLEASE IV"/>
    <property type="match status" value="1"/>
</dbReference>
<dbReference type="Pfam" id="PF01261">
    <property type="entry name" value="AP_endonuc_2"/>
    <property type="match status" value="1"/>
</dbReference>
<dbReference type="SMART" id="SM00518">
    <property type="entry name" value="AP2Ec"/>
    <property type="match status" value="1"/>
</dbReference>
<dbReference type="SUPFAM" id="SSF51658">
    <property type="entry name" value="Xylose isomerase-like"/>
    <property type="match status" value="1"/>
</dbReference>
<dbReference type="PROSITE" id="PS00729">
    <property type="entry name" value="AP_NUCLEASE_F2_1"/>
    <property type="match status" value="1"/>
</dbReference>
<dbReference type="PROSITE" id="PS00730">
    <property type="entry name" value="AP_NUCLEASE_F2_2"/>
    <property type="match status" value="1"/>
</dbReference>
<dbReference type="PROSITE" id="PS00731">
    <property type="entry name" value="AP_NUCLEASE_F2_3"/>
    <property type="match status" value="1"/>
</dbReference>
<dbReference type="PROSITE" id="PS51432">
    <property type="entry name" value="AP_NUCLEASE_F2_4"/>
    <property type="match status" value="1"/>
</dbReference>
<organism>
    <name type="scientific">Citrifermentans bemidjiense (strain ATCC BAA-1014 / DSM 16622 / JCM 12645 / Bem)</name>
    <name type="common">Geobacter bemidjiensis</name>
    <dbReference type="NCBI Taxonomy" id="404380"/>
    <lineage>
        <taxon>Bacteria</taxon>
        <taxon>Pseudomonadati</taxon>
        <taxon>Thermodesulfobacteriota</taxon>
        <taxon>Desulfuromonadia</taxon>
        <taxon>Geobacterales</taxon>
        <taxon>Geobacteraceae</taxon>
        <taxon>Citrifermentans</taxon>
    </lineage>
</organism>
<comment type="function">
    <text evidence="1">Endonuclease IV plays a role in DNA repair. It cleaves phosphodiester bonds at apurinic or apyrimidinic (AP) sites, generating a 3'-hydroxyl group and a 5'-terminal sugar phosphate.</text>
</comment>
<comment type="catalytic activity">
    <reaction evidence="1">
        <text>Endonucleolytic cleavage to 5'-phosphooligonucleotide end-products.</text>
        <dbReference type="EC" id="3.1.21.2"/>
    </reaction>
</comment>
<comment type="cofactor">
    <cofactor evidence="1">
        <name>Zn(2+)</name>
        <dbReference type="ChEBI" id="CHEBI:29105"/>
    </cofactor>
    <text evidence="1">Binds 3 Zn(2+) ions.</text>
</comment>
<comment type="similarity">
    <text evidence="1">Belongs to the AP endonuclease 2 family.</text>
</comment>
<accession>B5EAS8</accession>
<protein>
    <recommendedName>
        <fullName evidence="1">Probable endonuclease 4</fullName>
        <ecNumber evidence="1">3.1.21.2</ecNumber>
    </recommendedName>
    <alternativeName>
        <fullName evidence="1">Endodeoxyribonuclease IV</fullName>
    </alternativeName>
    <alternativeName>
        <fullName evidence="1">Endonuclease IV</fullName>
    </alternativeName>
</protein>
<evidence type="ECO:0000255" key="1">
    <source>
        <dbReference type="HAMAP-Rule" id="MF_00152"/>
    </source>
</evidence>
<sequence length="283" mass="30819">MDLLGAHVSIAGGIHNAVDRGVSSGCGVIQIFTQNSNQWKGKAVSPADAQLFRDKLTASGLSHVVSHDIYLINLAAAPGEVKDKSLIAFKEEMQRCAALGIDKIVMHPGSHTGDGEETGIRRICEAFDQLFAEVPEFTGKVLLENTAGQGTNLGYRFDHLKSIIEGSSYPTRFGVCFDTCHAFASGYPIADRDGYRRTFDEFDSALGIDKLMAFHLNDSKKGLGCKVDRHEHIGAGALGLEPFRFILNDPHFKLVPKFIETPKGDADEMDVVNLKLLRSLVEG</sequence>
<keyword id="KW-0227">DNA damage</keyword>
<keyword id="KW-0234">DNA repair</keyword>
<keyword id="KW-0255">Endonuclease</keyword>
<keyword id="KW-0378">Hydrolase</keyword>
<keyword id="KW-0479">Metal-binding</keyword>
<keyword id="KW-0540">Nuclease</keyword>
<keyword id="KW-1185">Reference proteome</keyword>
<keyword id="KW-0862">Zinc</keyword>
<name>END4_CITBB</name>